<reference key="1">
    <citation type="submission" date="2006-12" db="EMBL/GenBank/DDBJ databases">
        <title>Complete sequence of chromosome 1 of Acidovorax sp. JS42.</title>
        <authorList>
            <person name="Copeland A."/>
            <person name="Lucas S."/>
            <person name="Lapidus A."/>
            <person name="Barry K."/>
            <person name="Detter J.C."/>
            <person name="Glavina del Rio T."/>
            <person name="Dalin E."/>
            <person name="Tice H."/>
            <person name="Pitluck S."/>
            <person name="Chertkov O."/>
            <person name="Brettin T."/>
            <person name="Bruce D."/>
            <person name="Han C."/>
            <person name="Tapia R."/>
            <person name="Gilna P."/>
            <person name="Schmutz J."/>
            <person name="Larimer F."/>
            <person name="Land M."/>
            <person name="Hauser L."/>
            <person name="Kyrpides N."/>
            <person name="Kim E."/>
            <person name="Stahl D."/>
            <person name="Richardson P."/>
        </authorList>
    </citation>
    <scope>NUCLEOTIDE SEQUENCE [LARGE SCALE GENOMIC DNA]</scope>
    <source>
        <strain>JS42</strain>
    </source>
</reference>
<keyword id="KW-0028">Amino-acid biosynthesis</keyword>
<keyword id="KW-0055">Arginine biosynthesis</keyword>
<keyword id="KW-0067">ATP-binding</keyword>
<keyword id="KW-0963">Cytoplasm</keyword>
<keyword id="KW-0436">Ligase</keyword>
<keyword id="KW-0547">Nucleotide-binding</keyword>
<dbReference type="EC" id="6.3.4.5" evidence="1"/>
<dbReference type="EMBL" id="CP000539">
    <property type="protein sequence ID" value="ABM42884.1"/>
    <property type="molecule type" value="Genomic_DNA"/>
</dbReference>
<dbReference type="SMR" id="A1W9F9"/>
<dbReference type="STRING" id="232721.Ajs_2743"/>
<dbReference type="KEGG" id="ajs:Ajs_2743"/>
<dbReference type="eggNOG" id="COG0137">
    <property type="taxonomic scope" value="Bacteria"/>
</dbReference>
<dbReference type="HOGENOM" id="CLU_032784_4_1_4"/>
<dbReference type="UniPathway" id="UPA00068">
    <property type="reaction ID" value="UER00113"/>
</dbReference>
<dbReference type="Proteomes" id="UP000000645">
    <property type="component" value="Chromosome"/>
</dbReference>
<dbReference type="GO" id="GO:0005737">
    <property type="term" value="C:cytoplasm"/>
    <property type="evidence" value="ECO:0007669"/>
    <property type="project" value="UniProtKB-SubCell"/>
</dbReference>
<dbReference type="GO" id="GO:0004055">
    <property type="term" value="F:argininosuccinate synthase activity"/>
    <property type="evidence" value="ECO:0007669"/>
    <property type="project" value="UniProtKB-UniRule"/>
</dbReference>
<dbReference type="GO" id="GO:0005524">
    <property type="term" value="F:ATP binding"/>
    <property type="evidence" value="ECO:0007669"/>
    <property type="project" value="UniProtKB-UniRule"/>
</dbReference>
<dbReference type="GO" id="GO:0042803">
    <property type="term" value="F:protein homodimerization activity"/>
    <property type="evidence" value="ECO:0007669"/>
    <property type="project" value="InterPro"/>
</dbReference>
<dbReference type="GO" id="GO:0000053">
    <property type="term" value="P:argininosuccinate metabolic process"/>
    <property type="evidence" value="ECO:0007669"/>
    <property type="project" value="TreeGrafter"/>
</dbReference>
<dbReference type="GO" id="GO:0006526">
    <property type="term" value="P:L-arginine biosynthetic process"/>
    <property type="evidence" value="ECO:0007669"/>
    <property type="project" value="UniProtKB-UniRule"/>
</dbReference>
<dbReference type="GO" id="GO:0000050">
    <property type="term" value="P:urea cycle"/>
    <property type="evidence" value="ECO:0007669"/>
    <property type="project" value="TreeGrafter"/>
</dbReference>
<dbReference type="CDD" id="cd01999">
    <property type="entry name" value="ASS"/>
    <property type="match status" value="1"/>
</dbReference>
<dbReference type="Gene3D" id="1.10.287.400">
    <property type="match status" value="1"/>
</dbReference>
<dbReference type="Gene3D" id="3.90.1260.10">
    <property type="entry name" value="Argininosuccinate synthetase, chain A, domain 2"/>
    <property type="match status" value="1"/>
</dbReference>
<dbReference type="Gene3D" id="3.40.50.620">
    <property type="entry name" value="HUPs"/>
    <property type="match status" value="1"/>
</dbReference>
<dbReference type="HAMAP" id="MF_00581">
    <property type="entry name" value="Arg_succ_synth_type2"/>
    <property type="match status" value="1"/>
</dbReference>
<dbReference type="InterPro" id="IPR023437">
    <property type="entry name" value="Arg_succ_synth_type2_subfam"/>
</dbReference>
<dbReference type="InterPro" id="IPR048268">
    <property type="entry name" value="Arginosuc_syn_C"/>
</dbReference>
<dbReference type="InterPro" id="IPR048267">
    <property type="entry name" value="Arginosuc_syn_N"/>
</dbReference>
<dbReference type="InterPro" id="IPR001518">
    <property type="entry name" value="Arginosuc_synth"/>
</dbReference>
<dbReference type="InterPro" id="IPR018223">
    <property type="entry name" value="Arginosuc_synth_CS"/>
</dbReference>
<dbReference type="InterPro" id="IPR023434">
    <property type="entry name" value="Arginosuc_synth_type_1_subfam"/>
</dbReference>
<dbReference type="InterPro" id="IPR024074">
    <property type="entry name" value="AS_cat/multimer_dom_body"/>
</dbReference>
<dbReference type="InterPro" id="IPR024073">
    <property type="entry name" value="AS_multimer_C_tail"/>
</dbReference>
<dbReference type="InterPro" id="IPR014729">
    <property type="entry name" value="Rossmann-like_a/b/a_fold"/>
</dbReference>
<dbReference type="NCBIfam" id="TIGR00032">
    <property type="entry name" value="argG"/>
    <property type="match status" value="1"/>
</dbReference>
<dbReference type="NCBIfam" id="NF003779">
    <property type="entry name" value="PRK05370.1"/>
    <property type="match status" value="1"/>
</dbReference>
<dbReference type="PANTHER" id="PTHR11587">
    <property type="entry name" value="ARGININOSUCCINATE SYNTHASE"/>
    <property type="match status" value="1"/>
</dbReference>
<dbReference type="PANTHER" id="PTHR11587:SF2">
    <property type="entry name" value="ARGININOSUCCINATE SYNTHASE"/>
    <property type="match status" value="1"/>
</dbReference>
<dbReference type="Pfam" id="PF20979">
    <property type="entry name" value="Arginosuc_syn_C"/>
    <property type="match status" value="1"/>
</dbReference>
<dbReference type="Pfam" id="PF00764">
    <property type="entry name" value="Arginosuc_synth"/>
    <property type="match status" value="1"/>
</dbReference>
<dbReference type="SUPFAM" id="SSF52402">
    <property type="entry name" value="Adenine nucleotide alpha hydrolases-like"/>
    <property type="match status" value="1"/>
</dbReference>
<dbReference type="SUPFAM" id="SSF69864">
    <property type="entry name" value="Argininosuccinate synthetase, C-terminal domain"/>
    <property type="match status" value="1"/>
</dbReference>
<dbReference type="PROSITE" id="PS00564">
    <property type="entry name" value="ARGININOSUCCIN_SYN_1"/>
    <property type="match status" value="1"/>
</dbReference>
<dbReference type="PROSITE" id="PS00565">
    <property type="entry name" value="ARGININOSUCCIN_SYN_2"/>
    <property type="match status" value="1"/>
</dbReference>
<evidence type="ECO:0000255" key="1">
    <source>
        <dbReference type="HAMAP-Rule" id="MF_00581"/>
    </source>
</evidence>
<accession>A1W9F9</accession>
<gene>
    <name evidence="1" type="primary">argG</name>
    <name type="ordered locus">Ajs_2743</name>
</gene>
<sequence length="448" mass="49343">MATILQHLPVGQKVGIAFSGGLDTSAALRWMKNKGALPYAYTANLGQPDEADYDEIPRKAMEYGAEKARLIDCRTQLAHEGIAAIQAGAFHISTGGITYFNTTPLGRAVTGTMLVAAMKEDDVHIWGDGSTFKGNDIERFYRYGLLTNPALKIYKPWLDQKFIDELGGRAEMSAFMTKEGFGYKMSAEKAYSTDSNMLGATHEAKDLEFLSSGIRIVNPIMGVAFWKPEVDVPAEEVSVTFDEGQPVAVNGKEIADPVELFLELNRIGGRHGLGMSDQIENRIIEAKSRGIYEAPGMALLHIAYERLVTGIHNEDTIEQYRLNGLKLGRLLYQGRWFDPQAIMLRETAQRWVARAVTGTVTLELRRGNDYSILNTESPNLTYAPERLSMEKVEDAPFSPLDRIGQLTMRNLDISDTRGKLGVYARAGLLSLGGNAALAQLEDGGAKKK</sequence>
<name>ASSY_ACISJ</name>
<organism>
    <name type="scientific">Acidovorax sp. (strain JS42)</name>
    <dbReference type="NCBI Taxonomy" id="232721"/>
    <lineage>
        <taxon>Bacteria</taxon>
        <taxon>Pseudomonadati</taxon>
        <taxon>Pseudomonadota</taxon>
        <taxon>Betaproteobacteria</taxon>
        <taxon>Burkholderiales</taxon>
        <taxon>Comamonadaceae</taxon>
        <taxon>Acidovorax</taxon>
    </lineage>
</organism>
<protein>
    <recommendedName>
        <fullName evidence="1">Argininosuccinate synthase</fullName>
        <ecNumber evidence="1">6.3.4.5</ecNumber>
    </recommendedName>
    <alternativeName>
        <fullName evidence="1">Citrulline--aspartate ligase</fullName>
    </alternativeName>
</protein>
<feature type="chain" id="PRO_1000025410" description="Argininosuccinate synthase">
    <location>
        <begin position="1"/>
        <end position="448"/>
    </location>
</feature>
<feature type="binding site" evidence="1">
    <location>
        <begin position="17"/>
        <end position="25"/>
    </location>
    <ligand>
        <name>ATP</name>
        <dbReference type="ChEBI" id="CHEBI:30616"/>
    </ligand>
</feature>
<feature type="binding site" evidence="1">
    <location>
        <position position="43"/>
    </location>
    <ligand>
        <name>ATP</name>
        <dbReference type="ChEBI" id="CHEBI:30616"/>
    </ligand>
</feature>
<feature type="binding site" evidence="1">
    <location>
        <position position="99"/>
    </location>
    <ligand>
        <name>L-citrulline</name>
        <dbReference type="ChEBI" id="CHEBI:57743"/>
    </ligand>
</feature>
<feature type="binding site" evidence="1">
    <location>
        <position position="129"/>
    </location>
    <ligand>
        <name>ATP</name>
        <dbReference type="ChEBI" id="CHEBI:30616"/>
    </ligand>
</feature>
<feature type="binding site" evidence="1">
    <location>
        <position position="131"/>
    </location>
    <ligand>
        <name>ATP</name>
        <dbReference type="ChEBI" id="CHEBI:30616"/>
    </ligand>
</feature>
<feature type="binding site" evidence="1">
    <location>
        <position position="131"/>
    </location>
    <ligand>
        <name>L-aspartate</name>
        <dbReference type="ChEBI" id="CHEBI:29991"/>
    </ligand>
</feature>
<feature type="binding site" evidence="1">
    <location>
        <position position="135"/>
    </location>
    <ligand>
        <name>L-aspartate</name>
        <dbReference type="ChEBI" id="CHEBI:29991"/>
    </ligand>
</feature>
<feature type="binding site" evidence="1">
    <location>
        <position position="135"/>
    </location>
    <ligand>
        <name>L-citrulline</name>
        <dbReference type="ChEBI" id="CHEBI:57743"/>
    </ligand>
</feature>
<feature type="binding site" evidence="1">
    <location>
        <position position="136"/>
    </location>
    <ligand>
        <name>ATP</name>
        <dbReference type="ChEBI" id="CHEBI:30616"/>
    </ligand>
</feature>
<feature type="binding site" evidence="1">
    <location>
        <position position="136"/>
    </location>
    <ligand>
        <name>L-aspartate</name>
        <dbReference type="ChEBI" id="CHEBI:29991"/>
    </ligand>
</feature>
<feature type="binding site" evidence="1">
    <location>
        <position position="139"/>
    </location>
    <ligand>
        <name>L-citrulline</name>
        <dbReference type="ChEBI" id="CHEBI:57743"/>
    </ligand>
</feature>
<feature type="binding site" evidence="1">
    <location>
        <position position="192"/>
    </location>
    <ligand>
        <name>L-citrulline</name>
        <dbReference type="ChEBI" id="CHEBI:57743"/>
    </ligand>
</feature>
<feature type="binding site" evidence="1">
    <location>
        <position position="194"/>
    </location>
    <ligand>
        <name>ATP</name>
        <dbReference type="ChEBI" id="CHEBI:30616"/>
    </ligand>
</feature>
<feature type="binding site" evidence="1">
    <location>
        <position position="201"/>
    </location>
    <ligand>
        <name>L-citrulline</name>
        <dbReference type="ChEBI" id="CHEBI:57743"/>
    </ligand>
</feature>
<feature type="binding site" evidence="1">
    <location>
        <position position="203"/>
    </location>
    <ligand>
        <name>L-citrulline</name>
        <dbReference type="ChEBI" id="CHEBI:57743"/>
    </ligand>
</feature>
<feature type="binding site" evidence="1">
    <location>
        <position position="280"/>
    </location>
    <ligand>
        <name>L-citrulline</name>
        <dbReference type="ChEBI" id="CHEBI:57743"/>
    </ligand>
</feature>
<comment type="catalytic activity">
    <reaction evidence="1">
        <text>L-citrulline + L-aspartate + ATP = 2-(N(omega)-L-arginino)succinate + AMP + diphosphate + H(+)</text>
        <dbReference type="Rhea" id="RHEA:10932"/>
        <dbReference type="ChEBI" id="CHEBI:15378"/>
        <dbReference type="ChEBI" id="CHEBI:29991"/>
        <dbReference type="ChEBI" id="CHEBI:30616"/>
        <dbReference type="ChEBI" id="CHEBI:33019"/>
        <dbReference type="ChEBI" id="CHEBI:57472"/>
        <dbReference type="ChEBI" id="CHEBI:57743"/>
        <dbReference type="ChEBI" id="CHEBI:456215"/>
        <dbReference type="EC" id="6.3.4.5"/>
    </reaction>
</comment>
<comment type="pathway">
    <text evidence="1">Amino-acid biosynthesis; L-arginine biosynthesis; L-arginine from L-ornithine and carbamoyl phosphate: step 2/3.</text>
</comment>
<comment type="subunit">
    <text evidence="1">Homotetramer.</text>
</comment>
<comment type="subcellular location">
    <subcellularLocation>
        <location evidence="1">Cytoplasm</location>
    </subcellularLocation>
</comment>
<comment type="similarity">
    <text evidence="1">Belongs to the argininosuccinate synthase family. Type 2 subfamily.</text>
</comment>
<proteinExistence type="inferred from homology"/>